<sequence>MSKEKFQRLKPHINVGTIGHVDHGKTTLTAAITTVLSKKFGGSARAFDQIDNAPEEKARGITINTSHVEYDTEFRHYAHVDCPGHADYIKNMITGAAQMDGAILVVAATDGPMPQTREHILLGRQVGVPYIIVFLNKCDMVDDEELLELVEMEVRDLLTQYDFPGDDTPIIRGSALKALEGDPEWESKIIDLSKFLDSYIPEPKRAVDQPFLLPIEDVFSISGRGTVVTGRVEKGIIKVGEEVEIVGIKKTTKTTCTGVEMFRKLLDEGRAGENVGVLLRGTKRDEIERGQVLAKPGSIHPHTTFESEVYVLSKEEGGRHTPFFKGYRPQFYFRTTDVTGSIELPEGIEMVMPGDNIKMTVTLINPIAMADGLRFAIREGGRTVGAGVVSKVLL</sequence>
<feature type="chain" id="PRO_1000201394" description="Elongation factor Tu">
    <location>
        <begin position="1"/>
        <end position="394"/>
    </location>
</feature>
<feature type="domain" description="tr-type G">
    <location>
        <begin position="10"/>
        <end position="204"/>
    </location>
</feature>
<feature type="region of interest" description="G1" evidence="1">
    <location>
        <begin position="19"/>
        <end position="26"/>
    </location>
</feature>
<feature type="region of interest" description="G2" evidence="1">
    <location>
        <begin position="60"/>
        <end position="64"/>
    </location>
</feature>
<feature type="region of interest" description="G3" evidence="1">
    <location>
        <begin position="81"/>
        <end position="84"/>
    </location>
</feature>
<feature type="region of interest" description="G4" evidence="1">
    <location>
        <begin position="136"/>
        <end position="139"/>
    </location>
</feature>
<feature type="region of interest" description="G5" evidence="1">
    <location>
        <begin position="174"/>
        <end position="176"/>
    </location>
</feature>
<feature type="binding site" evidence="2">
    <location>
        <begin position="19"/>
        <end position="26"/>
    </location>
    <ligand>
        <name>GTP</name>
        <dbReference type="ChEBI" id="CHEBI:37565"/>
    </ligand>
</feature>
<feature type="binding site" evidence="2">
    <location>
        <position position="26"/>
    </location>
    <ligand>
        <name>Mg(2+)</name>
        <dbReference type="ChEBI" id="CHEBI:18420"/>
    </ligand>
</feature>
<feature type="binding site" evidence="2">
    <location>
        <begin position="81"/>
        <end position="85"/>
    </location>
    <ligand>
        <name>GTP</name>
        <dbReference type="ChEBI" id="CHEBI:37565"/>
    </ligand>
</feature>
<feature type="binding site" evidence="2">
    <location>
        <begin position="136"/>
        <end position="139"/>
    </location>
    <ligand>
        <name>GTP</name>
        <dbReference type="ChEBI" id="CHEBI:37565"/>
    </ligand>
</feature>
<comment type="function">
    <text evidence="2">GTP hydrolase that promotes the GTP-dependent binding of aminoacyl-tRNA to the A-site of ribosomes during protein biosynthesis.</text>
</comment>
<comment type="catalytic activity">
    <reaction evidence="2">
        <text>GTP + H2O = GDP + phosphate + H(+)</text>
        <dbReference type="Rhea" id="RHEA:19669"/>
        <dbReference type="ChEBI" id="CHEBI:15377"/>
        <dbReference type="ChEBI" id="CHEBI:15378"/>
        <dbReference type="ChEBI" id="CHEBI:37565"/>
        <dbReference type="ChEBI" id="CHEBI:43474"/>
        <dbReference type="ChEBI" id="CHEBI:58189"/>
        <dbReference type="EC" id="3.6.5.3"/>
    </reaction>
    <physiologicalReaction direction="left-to-right" evidence="2">
        <dbReference type="Rhea" id="RHEA:19670"/>
    </physiologicalReaction>
</comment>
<comment type="subunit">
    <text evidence="2">Monomer.</text>
</comment>
<comment type="subcellular location">
    <subcellularLocation>
        <location evidence="2">Cytoplasm</location>
    </subcellularLocation>
</comment>
<comment type="similarity">
    <text evidence="2">Belongs to the TRAFAC class translation factor GTPase superfamily. Classic translation factor GTPase family. EF-Tu/EF-1A subfamily.</text>
</comment>
<keyword id="KW-0963">Cytoplasm</keyword>
<keyword id="KW-0251">Elongation factor</keyword>
<keyword id="KW-0342">GTP-binding</keyword>
<keyword id="KW-0378">Hydrolase</keyword>
<keyword id="KW-0460">Magnesium</keyword>
<keyword id="KW-0479">Metal-binding</keyword>
<keyword id="KW-0547">Nucleotide-binding</keyword>
<keyword id="KW-0648">Protein biosynthesis</keyword>
<dbReference type="EC" id="3.6.5.3" evidence="2"/>
<dbReference type="EMBL" id="CP001158">
    <property type="protein sequence ID" value="ACL30316.1"/>
    <property type="molecule type" value="Genomic_DNA"/>
</dbReference>
<dbReference type="RefSeq" id="WP_009874477.1">
    <property type="nucleotide sequence ID" value="NC_011834.1"/>
</dbReference>
<dbReference type="SMR" id="B8D851"/>
<dbReference type="KEGG" id="bau:BUAPTUC7_520"/>
<dbReference type="HOGENOM" id="CLU_007265_0_2_6"/>
<dbReference type="GO" id="GO:0005829">
    <property type="term" value="C:cytosol"/>
    <property type="evidence" value="ECO:0007669"/>
    <property type="project" value="TreeGrafter"/>
</dbReference>
<dbReference type="GO" id="GO:0005525">
    <property type="term" value="F:GTP binding"/>
    <property type="evidence" value="ECO:0007669"/>
    <property type="project" value="UniProtKB-UniRule"/>
</dbReference>
<dbReference type="GO" id="GO:0003924">
    <property type="term" value="F:GTPase activity"/>
    <property type="evidence" value="ECO:0007669"/>
    <property type="project" value="InterPro"/>
</dbReference>
<dbReference type="GO" id="GO:0097216">
    <property type="term" value="F:guanosine tetraphosphate binding"/>
    <property type="evidence" value="ECO:0007669"/>
    <property type="project" value="UniProtKB-ARBA"/>
</dbReference>
<dbReference type="GO" id="GO:0003746">
    <property type="term" value="F:translation elongation factor activity"/>
    <property type="evidence" value="ECO:0007669"/>
    <property type="project" value="UniProtKB-UniRule"/>
</dbReference>
<dbReference type="CDD" id="cd01884">
    <property type="entry name" value="EF_Tu"/>
    <property type="match status" value="1"/>
</dbReference>
<dbReference type="CDD" id="cd03697">
    <property type="entry name" value="EFTU_II"/>
    <property type="match status" value="1"/>
</dbReference>
<dbReference type="CDD" id="cd03707">
    <property type="entry name" value="EFTU_III"/>
    <property type="match status" value="1"/>
</dbReference>
<dbReference type="FunFam" id="2.40.30.10:FF:000001">
    <property type="entry name" value="Elongation factor Tu"/>
    <property type="match status" value="1"/>
</dbReference>
<dbReference type="FunFam" id="3.40.50.300:FF:000003">
    <property type="entry name" value="Elongation factor Tu"/>
    <property type="match status" value="1"/>
</dbReference>
<dbReference type="Gene3D" id="3.40.50.300">
    <property type="entry name" value="P-loop containing nucleotide triphosphate hydrolases"/>
    <property type="match status" value="1"/>
</dbReference>
<dbReference type="Gene3D" id="2.40.30.10">
    <property type="entry name" value="Translation factors"/>
    <property type="match status" value="2"/>
</dbReference>
<dbReference type="HAMAP" id="MF_00118_B">
    <property type="entry name" value="EF_Tu_B"/>
    <property type="match status" value="1"/>
</dbReference>
<dbReference type="InterPro" id="IPR041709">
    <property type="entry name" value="EF-Tu_GTP-bd"/>
</dbReference>
<dbReference type="InterPro" id="IPR050055">
    <property type="entry name" value="EF-Tu_GTPase"/>
</dbReference>
<dbReference type="InterPro" id="IPR004161">
    <property type="entry name" value="EFTu-like_2"/>
</dbReference>
<dbReference type="InterPro" id="IPR033720">
    <property type="entry name" value="EFTU_2"/>
</dbReference>
<dbReference type="InterPro" id="IPR031157">
    <property type="entry name" value="G_TR_CS"/>
</dbReference>
<dbReference type="InterPro" id="IPR027417">
    <property type="entry name" value="P-loop_NTPase"/>
</dbReference>
<dbReference type="InterPro" id="IPR005225">
    <property type="entry name" value="Small_GTP-bd"/>
</dbReference>
<dbReference type="InterPro" id="IPR000795">
    <property type="entry name" value="T_Tr_GTP-bd_dom"/>
</dbReference>
<dbReference type="InterPro" id="IPR009000">
    <property type="entry name" value="Transl_B-barrel_sf"/>
</dbReference>
<dbReference type="InterPro" id="IPR009001">
    <property type="entry name" value="Transl_elong_EF1A/Init_IF2_C"/>
</dbReference>
<dbReference type="InterPro" id="IPR004541">
    <property type="entry name" value="Transl_elong_EFTu/EF1A_bac/org"/>
</dbReference>
<dbReference type="InterPro" id="IPR004160">
    <property type="entry name" value="Transl_elong_EFTu/EF1A_C"/>
</dbReference>
<dbReference type="NCBIfam" id="TIGR00485">
    <property type="entry name" value="EF-Tu"/>
    <property type="match status" value="1"/>
</dbReference>
<dbReference type="NCBIfam" id="NF000766">
    <property type="entry name" value="PRK00049.1"/>
    <property type="match status" value="1"/>
</dbReference>
<dbReference type="NCBIfam" id="NF009372">
    <property type="entry name" value="PRK12735.1"/>
    <property type="match status" value="1"/>
</dbReference>
<dbReference type="NCBIfam" id="NF009373">
    <property type="entry name" value="PRK12736.1"/>
    <property type="match status" value="1"/>
</dbReference>
<dbReference type="NCBIfam" id="TIGR00231">
    <property type="entry name" value="small_GTP"/>
    <property type="match status" value="1"/>
</dbReference>
<dbReference type="PANTHER" id="PTHR43721:SF22">
    <property type="entry name" value="ELONGATION FACTOR TU, MITOCHONDRIAL"/>
    <property type="match status" value="1"/>
</dbReference>
<dbReference type="PANTHER" id="PTHR43721">
    <property type="entry name" value="ELONGATION FACTOR TU-RELATED"/>
    <property type="match status" value="1"/>
</dbReference>
<dbReference type="Pfam" id="PF00009">
    <property type="entry name" value="GTP_EFTU"/>
    <property type="match status" value="1"/>
</dbReference>
<dbReference type="Pfam" id="PF03144">
    <property type="entry name" value="GTP_EFTU_D2"/>
    <property type="match status" value="1"/>
</dbReference>
<dbReference type="Pfam" id="PF03143">
    <property type="entry name" value="GTP_EFTU_D3"/>
    <property type="match status" value="1"/>
</dbReference>
<dbReference type="PRINTS" id="PR00315">
    <property type="entry name" value="ELONGATNFCT"/>
</dbReference>
<dbReference type="SUPFAM" id="SSF50465">
    <property type="entry name" value="EF-Tu/eEF-1alpha/eIF2-gamma C-terminal domain"/>
    <property type="match status" value="1"/>
</dbReference>
<dbReference type="SUPFAM" id="SSF52540">
    <property type="entry name" value="P-loop containing nucleoside triphosphate hydrolases"/>
    <property type="match status" value="1"/>
</dbReference>
<dbReference type="SUPFAM" id="SSF50447">
    <property type="entry name" value="Translation proteins"/>
    <property type="match status" value="1"/>
</dbReference>
<dbReference type="PROSITE" id="PS00301">
    <property type="entry name" value="G_TR_1"/>
    <property type="match status" value="1"/>
</dbReference>
<dbReference type="PROSITE" id="PS51722">
    <property type="entry name" value="G_TR_2"/>
    <property type="match status" value="1"/>
</dbReference>
<protein>
    <recommendedName>
        <fullName evidence="2">Elongation factor Tu</fullName>
        <shortName evidence="2">EF-Tu</shortName>
        <ecNumber evidence="2">3.6.5.3</ecNumber>
    </recommendedName>
</protein>
<accession>B8D851</accession>
<gene>
    <name evidence="2" type="primary">tuf</name>
    <name type="ordered locus">BUAPTUC7_520</name>
</gene>
<evidence type="ECO:0000250" key="1"/>
<evidence type="ECO:0000255" key="2">
    <source>
        <dbReference type="HAMAP-Rule" id="MF_00118"/>
    </source>
</evidence>
<reference key="1">
    <citation type="journal article" date="2009" name="Science">
        <title>The dynamics and time scale of ongoing genomic erosion in symbiotic bacteria.</title>
        <authorList>
            <person name="Moran N.A."/>
            <person name="McLaughlin H.J."/>
            <person name="Sorek R."/>
        </authorList>
    </citation>
    <scope>NUCLEOTIDE SEQUENCE [LARGE SCALE GENOMIC DNA]</scope>
    <source>
        <strain>Tuc7</strain>
    </source>
</reference>
<organism>
    <name type="scientific">Buchnera aphidicola subsp. Acyrthosiphon pisum (strain Tuc7)</name>
    <dbReference type="NCBI Taxonomy" id="561501"/>
    <lineage>
        <taxon>Bacteria</taxon>
        <taxon>Pseudomonadati</taxon>
        <taxon>Pseudomonadota</taxon>
        <taxon>Gammaproteobacteria</taxon>
        <taxon>Enterobacterales</taxon>
        <taxon>Erwiniaceae</taxon>
        <taxon>Buchnera</taxon>
    </lineage>
</organism>
<proteinExistence type="inferred from homology"/>
<name>EFTU_BUCAT</name>